<accession>Q67SC7</accession>
<dbReference type="EMBL" id="AP006840">
    <property type="protein sequence ID" value="BAD39416.1"/>
    <property type="molecule type" value="Genomic_DNA"/>
</dbReference>
<dbReference type="RefSeq" id="WP_011194565.1">
    <property type="nucleotide sequence ID" value="NC_006177.1"/>
</dbReference>
<dbReference type="SMR" id="Q67SC7"/>
<dbReference type="STRING" id="292459.STH431"/>
<dbReference type="KEGG" id="sth:STH431"/>
<dbReference type="eggNOG" id="COG0211">
    <property type="taxonomic scope" value="Bacteria"/>
</dbReference>
<dbReference type="HOGENOM" id="CLU_095424_4_0_9"/>
<dbReference type="OrthoDB" id="9803474at2"/>
<dbReference type="Proteomes" id="UP000000417">
    <property type="component" value="Chromosome"/>
</dbReference>
<dbReference type="GO" id="GO:0022625">
    <property type="term" value="C:cytosolic large ribosomal subunit"/>
    <property type="evidence" value="ECO:0007669"/>
    <property type="project" value="TreeGrafter"/>
</dbReference>
<dbReference type="GO" id="GO:0003735">
    <property type="term" value="F:structural constituent of ribosome"/>
    <property type="evidence" value="ECO:0007669"/>
    <property type="project" value="InterPro"/>
</dbReference>
<dbReference type="GO" id="GO:0006412">
    <property type="term" value="P:translation"/>
    <property type="evidence" value="ECO:0007669"/>
    <property type="project" value="UniProtKB-UniRule"/>
</dbReference>
<dbReference type="FunFam" id="2.40.50.100:FF:000004">
    <property type="entry name" value="50S ribosomal protein L27"/>
    <property type="match status" value="1"/>
</dbReference>
<dbReference type="Gene3D" id="2.40.50.100">
    <property type="match status" value="1"/>
</dbReference>
<dbReference type="HAMAP" id="MF_00539">
    <property type="entry name" value="Ribosomal_bL27"/>
    <property type="match status" value="1"/>
</dbReference>
<dbReference type="InterPro" id="IPR001684">
    <property type="entry name" value="Ribosomal_bL27"/>
</dbReference>
<dbReference type="InterPro" id="IPR018261">
    <property type="entry name" value="Ribosomal_bL27_CS"/>
</dbReference>
<dbReference type="NCBIfam" id="TIGR00062">
    <property type="entry name" value="L27"/>
    <property type="match status" value="1"/>
</dbReference>
<dbReference type="PANTHER" id="PTHR15893:SF0">
    <property type="entry name" value="LARGE RIBOSOMAL SUBUNIT PROTEIN BL27M"/>
    <property type="match status" value="1"/>
</dbReference>
<dbReference type="PANTHER" id="PTHR15893">
    <property type="entry name" value="RIBOSOMAL PROTEIN L27"/>
    <property type="match status" value="1"/>
</dbReference>
<dbReference type="Pfam" id="PF01016">
    <property type="entry name" value="Ribosomal_L27"/>
    <property type="match status" value="1"/>
</dbReference>
<dbReference type="PRINTS" id="PR00063">
    <property type="entry name" value="RIBOSOMALL27"/>
</dbReference>
<dbReference type="SUPFAM" id="SSF110324">
    <property type="entry name" value="Ribosomal L27 protein-like"/>
    <property type="match status" value="1"/>
</dbReference>
<dbReference type="PROSITE" id="PS00831">
    <property type="entry name" value="RIBOSOMAL_L27"/>
    <property type="match status" value="1"/>
</dbReference>
<keyword id="KW-1185">Reference proteome</keyword>
<keyword id="KW-0687">Ribonucleoprotein</keyword>
<keyword id="KW-0689">Ribosomal protein</keyword>
<reference key="1">
    <citation type="journal article" date="2004" name="Nucleic Acids Res.">
        <title>Genome sequence of Symbiobacterium thermophilum, an uncultivable bacterium that depends on microbial commensalism.</title>
        <authorList>
            <person name="Ueda K."/>
            <person name="Yamashita A."/>
            <person name="Ishikawa J."/>
            <person name="Shimada M."/>
            <person name="Watsuji T."/>
            <person name="Morimura K."/>
            <person name="Ikeda H."/>
            <person name="Hattori M."/>
            <person name="Beppu T."/>
        </authorList>
    </citation>
    <scope>NUCLEOTIDE SEQUENCE [LARGE SCALE GENOMIC DNA]</scope>
    <source>
        <strain>DSM 24528 / JCM 14929 / IAM 14863 / T</strain>
    </source>
</reference>
<gene>
    <name evidence="2" type="primary">rpmA</name>
    <name type="ordered locus">STH431</name>
</gene>
<proteinExistence type="inferred from homology"/>
<comment type="PTM">
    <text evidence="1">The N-terminus is cleaved by ribosomal processing cysteine protease Prp.</text>
</comment>
<comment type="similarity">
    <text evidence="2">Belongs to the bacterial ribosomal protein bL27 family.</text>
</comment>
<organism>
    <name type="scientific">Symbiobacterium thermophilum (strain DSM 24528 / JCM 14929 / IAM 14863 / T)</name>
    <dbReference type="NCBI Taxonomy" id="292459"/>
    <lineage>
        <taxon>Bacteria</taxon>
        <taxon>Bacillati</taxon>
        <taxon>Bacillota</taxon>
        <taxon>Clostridia</taxon>
        <taxon>Eubacteriales</taxon>
        <taxon>Symbiobacteriaceae</taxon>
        <taxon>Symbiobacterium</taxon>
    </lineage>
</organism>
<evidence type="ECO:0000250" key="1">
    <source>
        <dbReference type="UniProtKB" id="Q2FXT0"/>
    </source>
</evidence>
<evidence type="ECO:0000255" key="2">
    <source>
        <dbReference type="HAMAP-Rule" id="MF_00539"/>
    </source>
</evidence>
<evidence type="ECO:0000305" key="3"/>
<feature type="propeptide" id="PRO_0000459972" evidence="1">
    <location>
        <begin position="1"/>
        <end position="6"/>
    </location>
</feature>
<feature type="chain" id="PRO_0000181186" description="Large ribosomal subunit protein bL27">
    <location>
        <begin position="7"/>
        <end position="95"/>
    </location>
</feature>
<protein>
    <recommendedName>
        <fullName evidence="2">Large ribosomal subunit protein bL27</fullName>
    </recommendedName>
    <alternativeName>
        <fullName evidence="3">50S ribosomal protein L27</fullName>
    </alternativeName>
</protein>
<sequence>MFLQLFASKKGVGSTKNGRDSNPKYLGVKKGDGSLVTVGQIIVRQRGTKIHPGANVGRGKDDTLYALADGIVKFGRKGANRKQVSVVPIQLAVEA</sequence>
<name>RL27_SYMTH</name>